<organism>
    <name type="scientific">Protophormia terraenovae</name>
    <name type="common">Northern blowfly</name>
    <name type="synonym">Lucilia terraenovae</name>
    <dbReference type="NCBI Taxonomy" id="34676"/>
    <lineage>
        <taxon>Eukaryota</taxon>
        <taxon>Metazoa</taxon>
        <taxon>Ecdysozoa</taxon>
        <taxon>Arthropoda</taxon>
        <taxon>Hexapoda</taxon>
        <taxon>Insecta</taxon>
        <taxon>Pterygota</taxon>
        <taxon>Neoptera</taxon>
        <taxon>Endopterygota</taxon>
        <taxon>Diptera</taxon>
        <taxon>Brachycera</taxon>
        <taxon>Muscomorpha</taxon>
        <taxon>Oestroidea</taxon>
        <taxon>Calliphoridae</taxon>
        <taxon>Chrysomyinae</taxon>
        <taxon>Protophormia</taxon>
    </lineage>
</organism>
<sequence length="94" mass="10110">MKFFMVFVVTFCLAVCFVSQSLAIPADAANDAHFVDGVQALKEIEPELHGRYKRATCDLLSGTGINHSACAAHCLLRGNRGGYCNGKGVCVCRN</sequence>
<feature type="signal peptide" evidence="1">
    <location>
        <begin position="1"/>
        <end position="23"/>
    </location>
</feature>
<feature type="propeptide" id="PRO_0000006748" evidence="4">
    <location>
        <begin position="24"/>
        <end position="54"/>
    </location>
</feature>
<feature type="chain" id="PRO_0000006749" description="Phormicin">
    <location>
        <begin position="55"/>
        <end position="94"/>
    </location>
</feature>
<feature type="disulfide bond" evidence="2 3">
    <location>
        <begin position="57"/>
        <end position="84"/>
    </location>
</feature>
<feature type="disulfide bond" evidence="2 3">
    <location>
        <begin position="70"/>
        <end position="90"/>
    </location>
</feature>
<feature type="disulfide bond" evidence="2 3">
    <location>
        <begin position="74"/>
        <end position="92"/>
    </location>
</feature>
<feature type="sequence variant" description="In defensin B.">
    <original>G</original>
    <variation>R</variation>
    <location>
        <position position="86"/>
    </location>
</feature>
<feature type="helix" evidence="5">
    <location>
        <begin position="68"/>
        <end position="77"/>
    </location>
</feature>
<feature type="strand" evidence="5">
    <location>
        <begin position="86"/>
        <end position="88"/>
    </location>
</feature>
<evidence type="ECO:0000255" key="1"/>
<evidence type="ECO:0000255" key="2">
    <source>
        <dbReference type="PROSITE-ProRule" id="PRU00710"/>
    </source>
</evidence>
<evidence type="ECO:0000269" key="3">
    <source>
    </source>
</evidence>
<evidence type="ECO:0000269" key="4">
    <source>
    </source>
</evidence>
<evidence type="ECO:0007829" key="5">
    <source>
        <dbReference type="PDB" id="1ICA"/>
    </source>
</evidence>
<proteinExistence type="evidence at protein level"/>
<keyword id="KW-0002">3D-structure</keyword>
<keyword id="KW-0044">Antibiotic</keyword>
<keyword id="KW-0929">Antimicrobial</keyword>
<keyword id="KW-0165">Cleavage on pair of basic residues</keyword>
<keyword id="KW-0211">Defensin</keyword>
<keyword id="KW-0903">Direct protein sequencing</keyword>
<keyword id="KW-1015">Disulfide bond</keyword>
<keyword id="KW-0391">Immunity</keyword>
<keyword id="KW-0399">Innate immunity</keyword>
<keyword id="KW-0964">Secreted</keyword>
<keyword id="KW-0732">Signal</keyword>
<name>DEFI_PROTE</name>
<reference key="1">
    <citation type="journal article" date="1990" name="EMBO J.">
        <title>Insect immunity: expression of the two major inducible antibacterial peptides, defensin and diptericin, in Phormia terranovae.</title>
        <authorList>
            <person name="Dimarcq J.-L."/>
            <person name="Zachary D."/>
            <person name="Hoffmann J.A."/>
            <person name="Hoffmann D."/>
            <person name="Reichhart J.-M."/>
        </authorList>
    </citation>
    <scope>NUCLEOTIDE SEQUENCE [MRNA]</scope>
</reference>
<reference key="2">
    <citation type="journal article" date="1989" name="Proc. Natl. Acad. Sci. U.S.A.">
        <title>Insect immunity: isolation from immune blood of the dipteran Phormia terranovae of two insect antibacterial peptides with sequence homology to rabbit lung macrophage bactericidal peptides.</title>
        <authorList>
            <person name="Lambert J."/>
            <person name="Keppi E."/>
            <person name="Dimarcq J.-L."/>
            <person name="Wicker C."/>
            <person name="Reichhart J.-M."/>
            <person name="Dunbar B."/>
            <person name="Lepage P."/>
            <person name="van Dorsselaer A."/>
            <person name="Hoffmann J.A."/>
            <person name="Fothergill J."/>
            <person name="Hoffmann D."/>
        </authorList>
    </citation>
    <scope>PROTEIN SEQUENCE OF 55-94</scope>
    <source>
        <tissue>Hemolymph</tissue>
    </source>
</reference>
<reference key="3">
    <citation type="journal article" date="1991" name="Eur. J. Biochem.">
        <title>Determination of disulfide bridges in natural and recombinant insect defensin A.</title>
        <authorList>
            <person name="Lepage P."/>
            <person name="Bitsch F."/>
            <person name="Roecklin D."/>
            <person name="Keppi E."/>
            <person name="Dimarcq J.-L."/>
            <person name="Reichhart J.-M."/>
            <person name="Hoffmann J.A."/>
            <person name="Roitsch C."/>
            <person name="van Dorsselaer A."/>
        </authorList>
    </citation>
    <scope>DISULFIDE BONDS</scope>
</reference>
<reference key="4">
    <citation type="journal article" date="1992" name="Biochimie">
        <title>Progress in multidimensional NMR investigations of peptide and protein 3-D structures in solution. From structure to functional aspects.</title>
        <authorList>
            <person name="Bonmatin J.-M."/>
            <person name="Genest M."/>
            <person name="Petit M.-C."/>
            <person name="Gincel E."/>
            <person name="Simorre J.-P."/>
            <person name="Cornet B."/>
            <person name="Gallet X."/>
            <person name="Caille A."/>
            <person name="Labbe H."/>
            <person name="Vovelle F."/>
            <person name="Ptak M."/>
        </authorList>
    </citation>
    <scope>STRUCTURE BY NMR</scope>
</reference>
<reference key="5">
    <citation type="journal article" date="1995" name="Structure">
        <title>Refined three-dimensional solution structure of insect defensin A.</title>
        <authorList>
            <person name="Cornet B."/>
            <person name="Bonmatin J.-M."/>
            <person name="Hetru C."/>
            <person name="Hoffmann J.A."/>
            <person name="Ptak M."/>
            <person name="Vovelle F."/>
        </authorList>
    </citation>
    <scope>STRUCTURE BY NMR OF 55-94</scope>
</reference>
<protein>
    <recommendedName>
        <fullName>Phormicin</fullName>
    </recommendedName>
    <alternativeName>
        <fullName>Insect defensin A/B</fullName>
    </alternativeName>
</protein>
<comment type="function">
    <text>Responsible for the anti Gram-positive activity of immune hemolymph of P.terraenovae.</text>
</comment>
<comment type="subcellular location">
    <subcellularLocation>
        <location>Secreted</location>
    </subcellularLocation>
</comment>
<comment type="similarity">
    <text evidence="2">Belongs to the invertebrate defensin family. Type 1 subfamily.</text>
</comment>
<accession>P10891</accession>
<dbReference type="EMBL" id="X55546">
    <property type="protein sequence ID" value="CAA39152.1"/>
    <property type="molecule type" value="mRNA"/>
</dbReference>
<dbReference type="PIR" id="S12558">
    <property type="entry name" value="S12558"/>
</dbReference>
<dbReference type="PDB" id="1ICA">
    <property type="method" value="NMR"/>
    <property type="chains" value="A=55-94"/>
</dbReference>
<dbReference type="PDBsum" id="1ICA"/>
<dbReference type="BMRB" id="P10891"/>
<dbReference type="SMR" id="P10891"/>
<dbReference type="TCDB" id="1.C.47.1.2">
    <property type="family name" value="the insect/fungal defensin (insect/fungal defensin) family"/>
</dbReference>
<dbReference type="EvolutionaryTrace" id="P10891"/>
<dbReference type="GO" id="GO:0005615">
    <property type="term" value="C:extracellular space"/>
    <property type="evidence" value="ECO:0007669"/>
    <property type="project" value="TreeGrafter"/>
</dbReference>
<dbReference type="GO" id="GO:0050830">
    <property type="term" value="P:defense response to Gram-positive bacterium"/>
    <property type="evidence" value="ECO:0007669"/>
    <property type="project" value="UniProtKB-ARBA"/>
</dbReference>
<dbReference type="GO" id="GO:0006959">
    <property type="term" value="P:humoral immune response"/>
    <property type="evidence" value="ECO:0007669"/>
    <property type="project" value="TreeGrafter"/>
</dbReference>
<dbReference type="GO" id="GO:0045087">
    <property type="term" value="P:innate immune response"/>
    <property type="evidence" value="ECO:0007669"/>
    <property type="project" value="UniProtKB-KW"/>
</dbReference>
<dbReference type="CDD" id="cd21806">
    <property type="entry name" value="DEFL_defensin-like"/>
    <property type="match status" value="1"/>
</dbReference>
<dbReference type="FunFam" id="3.30.30.10:FF:000005">
    <property type="entry name" value="Defensin"/>
    <property type="match status" value="1"/>
</dbReference>
<dbReference type="Gene3D" id="3.30.30.10">
    <property type="entry name" value="Knottin, scorpion toxin-like"/>
    <property type="match status" value="1"/>
</dbReference>
<dbReference type="InterPro" id="IPR017982">
    <property type="entry name" value="Defensin_insect"/>
</dbReference>
<dbReference type="InterPro" id="IPR001542">
    <property type="entry name" value="Defensin_invertebrate/fungal"/>
</dbReference>
<dbReference type="InterPro" id="IPR003614">
    <property type="entry name" value="Scorpion_toxin-like"/>
</dbReference>
<dbReference type="InterPro" id="IPR036574">
    <property type="entry name" value="Scorpion_toxin-like_sf"/>
</dbReference>
<dbReference type="PANTHER" id="PTHR13645">
    <property type="entry name" value="DEFENSIN"/>
    <property type="match status" value="1"/>
</dbReference>
<dbReference type="PANTHER" id="PTHR13645:SF0">
    <property type="entry name" value="DEFENSIN"/>
    <property type="match status" value="1"/>
</dbReference>
<dbReference type="Pfam" id="PF01097">
    <property type="entry name" value="Defensin_2"/>
    <property type="match status" value="1"/>
</dbReference>
<dbReference type="PRINTS" id="PR00271">
    <property type="entry name" value="DEFENSIN"/>
</dbReference>
<dbReference type="SMART" id="SM00505">
    <property type="entry name" value="Knot1"/>
    <property type="match status" value="1"/>
</dbReference>
<dbReference type="SUPFAM" id="SSF57095">
    <property type="entry name" value="Scorpion toxin-like"/>
    <property type="match status" value="1"/>
</dbReference>
<dbReference type="PROSITE" id="PS51378">
    <property type="entry name" value="INVERT_DEFENSINS"/>
    <property type="match status" value="1"/>
</dbReference>